<feature type="chain" id="PRO_1000185577" description="6-phospho-beta-galactosidase">
    <location>
        <begin position="1"/>
        <end position="468"/>
    </location>
</feature>
<feature type="active site" description="Proton donor" evidence="1">
    <location>
        <position position="160"/>
    </location>
</feature>
<feature type="active site" description="Nucleophile" evidence="1">
    <location>
        <position position="375"/>
    </location>
</feature>
<feature type="binding site" evidence="1">
    <location>
        <position position="19"/>
    </location>
    <ligand>
        <name>D-galactose 6-phosphate</name>
        <dbReference type="ChEBI" id="CHEBI:91004"/>
    </ligand>
</feature>
<feature type="binding site" evidence="1">
    <location>
        <position position="116"/>
    </location>
    <ligand>
        <name>D-galactose 6-phosphate</name>
        <dbReference type="ChEBI" id="CHEBI:91004"/>
    </ligand>
</feature>
<feature type="binding site" evidence="1">
    <location>
        <position position="159"/>
    </location>
    <ligand>
        <name>D-galactose 6-phosphate</name>
        <dbReference type="ChEBI" id="CHEBI:91004"/>
    </ligand>
</feature>
<feature type="binding site" evidence="1">
    <location>
        <position position="160"/>
    </location>
    <ligand>
        <name>D-galactose 6-phosphate</name>
        <dbReference type="ChEBI" id="CHEBI:91004"/>
    </ligand>
</feature>
<feature type="binding site" evidence="1">
    <location>
        <position position="297"/>
    </location>
    <ligand>
        <name>D-galactose 6-phosphate</name>
        <dbReference type="ChEBI" id="CHEBI:91004"/>
    </ligand>
</feature>
<feature type="binding site" evidence="1">
    <location>
        <position position="428"/>
    </location>
    <ligand>
        <name>D-galactose 6-phosphate</name>
        <dbReference type="ChEBI" id="CHEBI:91004"/>
    </ligand>
</feature>
<feature type="binding site" evidence="1">
    <location>
        <position position="429"/>
    </location>
    <ligand>
        <name>D-galactose 6-phosphate</name>
        <dbReference type="ChEBI" id="CHEBI:91004"/>
    </ligand>
</feature>
<feature type="binding site" evidence="1">
    <location>
        <position position="435"/>
    </location>
    <ligand>
        <name>D-galactose 6-phosphate</name>
        <dbReference type="ChEBI" id="CHEBI:91004"/>
    </ligand>
</feature>
<feature type="binding site" evidence="1">
    <location>
        <position position="437"/>
    </location>
    <ligand>
        <name>D-galactose 6-phosphate</name>
        <dbReference type="ChEBI" id="CHEBI:91004"/>
    </ligand>
</feature>
<gene>
    <name evidence="1" type="primary">lacG</name>
    <name type="ordered locus">SPJ_1102</name>
</gene>
<proteinExistence type="inferred from homology"/>
<keyword id="KW-0326">Glycosidase</keyword>
<keyword id="KW-0378">Hydrolase</keyword>
<dbReference type="EC" id="3.2.1.85" evidence="1"/>
<dbReference type="EMBL" id="CP000919">
    <property type="protein sequence ID" value="ACO18396.1"/>
    <property type="molecule type" value="Genomic_DNA"/>
</dbReference>
<dbReference type="RefSeq" id="WP_000169247.1">
    <property type="nucleotide sequence ID" value="NC_012466.1"/>
</dbReference>
<dbReference type="SMR" id="C1CEE7"/>
<dbReference type="CAZy" id="GH1">
    <property type="family name" value="Glycoside Hydrolase Family 1"/>
</dbReference>
<dbReference type="KEGG" id="sjj:SPJ_1102"/>
<dbReference type="HOGENOM" id="CLU_001859_1_3_9"/>
<dbReference type="UniPathway" id="UPA00542">
    <property type="reaction ID" value="UER00605"/>
</dbReference>
<dbReference type="Proteomes" id="UP000002206">
    <property type="component" value="Chromosome"/>
</dbReference>
<dbReference type="GO" id="GO:0005829">
    <property type="term" value="C:cytosol"/>
    <property type="evidence" value="ECO:0007669"/>
    <property type="project" value="TreeGrafter"/>
</dbReference>
<dbReference type="GO" id="GO:0033920">
    <property type="term" value="F:6-phospho-beta-galactosidase activity"/>
    <property type="evidence" value="ECO:0007669"/>
    <property type="project" value="UniProtKB-UniRule"/>
</dbReference>
<dbReference type="GO" id="GO:0008422">
    <property type="term" value="F:beta-glucosidase activity"/>
    <property type="evidence" value="ECO:0007669"/>
    <property type="project" value="TreeGrafter"/>
</dbReference>
<dbReference type="GO" id="GO:0019512">
    <property type="term" value="P:lactose catabolic process via tagatose-6-phosphate"/>
    <property type="evidence" value="ECO:0007669"/>
    <property type="project" value="InterPro"/>
</dbReference>
<dbReference type="FunFam" id="3.20.20.80:FF:000004">
    <property type="entry name" value="Beta-glucosidase 6-phospho-beta-glucosidase"/>
    <property type="match status" value="1"/>
</dbReference>
<dbReference type="Gene3D" id="3.20.20.80">
    <property type="entry name" value="Glycosidases"/>
    <property type="match status" value="1"/>
</dbReference>
<dbReference type="HAMAP" id="MF_01574">
    <property type="entry name" value="LacG"/>
    <property type="match status" value="1"/>
</dbReference>
<dbReference type="InterPro" id="IPR005928">
    <property type="entry name" value="6P-beta-galactosidase"/>
</dbReference>
<dbReference type="InterPro" id="IPR001360">
    <property type="entry name" value="Glyco_hydro_1"/>
</dbReference>
<dbReference type="InterPro" id="IPR018120">
    <property type="entry name" value="Glyco_hydro_1_AS"/>
</dbReference>
<dbReference type="InterPro" id="IPR033132">
    <property type="entry name" value="Glyco_hydro_1_N_CS"/>
</dbReference>
<dbReference type="InterPro" id="IPR017853">
    <property type="entry name" value="Glycoside_hydrolase_SF"/>
</dbReference>
<dbReference type="NCBIfam" id="TIGR01233">
    <property type="entry name" value="lacG"/>
    <property type="match status" value="1"/>
</dbReference>
<dbReference type="NCBIfam" id="NF010036">
    <property type="entry name" value="PRK13511.1"/>
    <property type="match status" value="1"/>
</dbReference>
<dbReference type="PANTHER" id="PTHR10353">
    <property type="entry name" value="GLYCOSYL HYDROLASE"/>
    <property type="match status" value="1"/>
</dbReference>
<dbReference type="PANTHER" id="PTHR10353:SF36">
    <property type="entry name" value="LP05116P"/>
    <property type="match status" value="1"/>
</dbReference>
<dbReference type="Pfam" id="PF00232">
    <property type="entry name" value="Glyco_hydro_1"/>
    <property type="match status" value="1"/>
</dbReference>
<dbReference type="PRINTS" id="PR00131">
    <property type="entry name" value="GLHYDRLASE1"/>
</dbReference>
<dbReference type="SUPFAM" id="SSF51445">
    <property type="entry name" value="(Trans)glycosidases"/>
    <property type="match status" value="1"/>
</dbReference>
<dbReference type="PROSITE" id="PS00572">
    <property type="entry name" value="GLYCOSYL_HYDROL_F1_1"/>
    <property type="match status" value="1"/>
</dbReference>
<dbReference type="PROSITE" id="PS00653">
    <property type="entry name" value="GLYCOSYL_HYDROL_F1_2"/>
    <property type="match status" value="1"/>
</dbReference>
<comment type="catalytic activity">
    <reaction evidence="1">
        <text>a 6-phospho-beta-D-galactoside + H2O = D-galactose 6-phosphate + an alcohol</text>
        <dbReference type="Rhea" id="RHEA:24568"/>
        <dbReference type="ChEBI" id="CHEBI:15377"/>
        <dbReference type="ChEBI" id="CHEBI:30879"/>
        <dbReference type="ChEBI" id="CHEBI:58534"/>
        <dbReference type="ChEBI" id="CHEBI:91004"/>
        <dbReference type="EC" id="3.2.1.85"/>
    </reaction>
</comment>
<comment type="pathway">
    <text evidence="1">Carbohydrate metabolism; lactose degradation; D-galactose 6-phosphate and beta-D-glucose from lactose 6-phosphate: step 1/1.</text>
</comment>
<comment type="similarity">
    <text evidence="1">Belongs to the glycosyl hydrolase 1 family.</text>
</comment>
<reference key="1">
    <citation type="journal article" date="2010" name="Genome Biol.">
        <title>Structure and dynamics of the pan-genome of Streptococcus pneumoniae and closely related species.</title>
        <authorList>
            <person name="Donati C."/>
            <person name="Hiller N.L."/>
            <person name="Tettelin H."/>
            <person name="Muzzi A."/>
            <person name="Croucher N.J."/>
            <person name="Angiuoli S.V."/>
            <person name="Oggioni M."/>
            <person name="Dunning Hotopp J.C."/>
            <person name="Hu F.Z."/>
            <person name="Riley D.R."/>
            <person name="Covacci A."/>
            <person name="Mitchell T.J."/>
            <person name="Bentley S.D."/>
            <person name="Kilian M."/>
            <person name="Ehrlich G.D."/>
            <person name="Rappuoli R."/>
            <person name="Moxon E.R."/>
            <person name="Masignani V."/>
        </authorList>
    </citation>
    <scope>NUCLEOTIDE SEQUENCE [LARGE SCALE GENOMIC DNA]</scope>
    <source>
        <strain>JJA</strain>
    </source>
</reference>
<evidence type="ECO:0000255" key="1">
    <source>
        <dbReference type="HAMAP-Rule" id="MF_01574"/>
    </source>
</evidence>
<accession>C1CEE7</accession>
<protein>
    <recommendedName>
        <fullName evidence="1">6-phospho-beta-galactosidase</fullName>
        <ecNumber evidence="1">3.2.1.85</ecNumber>
    </recommendedName>
    <alternativeName>
        <fullName evidence="1">Beta-D-phosphogalactoside galactohydrolase</fullName>
        <shortName evidence="1">PGALase</shortName>
    </alternativeName>
    <alternativeName>
        <fullName evidence="1">P-beta-Gal</fullName>
        <shortName evidence="1">PBG</shortName>
    </alternativeName>
</protein>
<name>LACG_STRZJ</name>
<sequence length="468" mass="53853">MTKTLPKDFIFGGATAAYQAEGATHTDGKGPVAWDKYLEDNYWYTAEPASDFYNRYPVDLKLAEEYGVNGIRISIAWSRIFPTGYGQVNAKGVEFYHNLFAECHKRHVEPFVTLHHFDTPEALHSNGDFLNRENIEHFVDYAAFCFEEFPEVNYWTTFNEIGPIGDGQYLVGKFPPGIQYDLAKVFQSHHNMMVSHACAVKLYKEKGYKGEIGVVHALPTKYPLDPENPADVRAAELEDIIHNKFILDATYLGRYSAETMEGVNHILSVNGGSLDLREEDFTALEAAKDLNDFLGINYYMSDWMEAFDGETEIIHNGKGEKGSSKYQIKGIGRRVAPDYVSRTDWDWIIYPQGLYDQIMRVKKDYPNYKKIYITENGLGYKDEFVDNTVYDDGRIDYVKQHLEILSDAIADGANVKGYFIWSLMDVFSWSNGYEKRYGLFYVDFETQERYPKKSAHWYKKVAETQIID</sequence>
<organism>
    <name type="scientific">Streptococcus pneumoniae (strain JJA)</name>
    <dbReference type="NCBI Taxonomy" id="488222"/>
    <lineage>
        <taxon>Bacteria</taxon>
        <taxon>Bacillati</taxon>
        <taxon>Bacillota</taxon>
        <taxon>Bacilli</taxon>
        <taxon>Lactobacillales</taxon>
        <taxon>Streptococcaceae</taxon>
        <taxon>Streptococcus</taxon>
    </lineage>
</organism>